<sequence>MGRFIFISFGLLVVFLSLSGTEAECLPDWFHYEGHCYRVFDEPKTWADAEKFCSEQANGGHLVSVHSKKEAGLVGVLAYQTLESPIVWMGLSKIWNQCDWTWTNGAKLKYEAWAEESYCIHITSKKKEWKSLPCRNYGHFVCKSPA</sequence>
<keyword id="KW-1015">Disulfide bond</keyword>
<keyword id="KW-1199">Hemostasis impairing toxin</keyword>
<keyword id="KW-0964">Secreted</keyword>
<keyword id="KW-0732">Signal</keyword>
<keyword id="KW-0800">Toxin</keyword>
<protein>
    <recommendedName>
        <fullName>Snaclec 5</fullName>
    </recommendedName>
    <alternativeName>
        <fullName>C-type lectin 5</fullName>
        <shortName>CTL-5</shortName>
    </alternativeName>
</protein>
<accession>Q6X5S1</accession>
<organism>
    <name type="scientific">Echis pyramidum leakeyi</name>
    <name type="common">Leakey's carpet viper</name>
    <name type="synonym">Echis carinatus leakeyi</name>
    <dbReference type="NCBI Taxonomy" id="38415"/>
    <lineage>
        <taxon>Eukaryota</taxon>
        <taxon>Metazoa</taxon>
        <taxon>Chordata</taxon>
        <taxon>Craniata</taxon>
        <taxon>Vertebrata</taxon>
        <taxon>Euteleostomi</taxon>
        <taxon>Lepidosauria</taxon>
        <taxon>Squamata</taxon>
        <taxon>Bifurcata</taxon>
        <taxon>Unidentata</taxon>
        <taxon>Episquamata</taxon>
        <taxon>Toxicofera</taxon>
        <taxon>Serpentes</taxon>
        <taxon>Colubroidea</taxon>
        <taxon>Viperidae</taxon>
        <taxon>Viperinae</taxon>
        <taxon>Echis</taxon>
    </lineage>
</organism>
<evidence type="ECO:0000250" key="1"/>
<evidence type="ECO:0000255" key="2"/>
<evidence type="ECO:0000255" key="3">
    <source>
        <dbReference type="PROSITE-ProRule" id="PRU00040"/>
    </source>
</evidence>
<evidence type="ECO:0000305" key="4"/>
<feature type="signal peptide" evidence="2">
    <location>
        <begin position="1"/>
        <end position="23"/>
    </location>
</feature>
<feature type="chain" id="PRO_0000355276" description="Snaclec 5">
    <location>
        <begin position="24"/>
        <end position="146"/>
    </location>
</feature>
<feature type="domain" description="C-type lectin" evidence="3">
    <location>
        <begin position="32"/>
        <end position="143"/>
    </location>
</feature>
<feature type="disulfide bond" evidence="3">
    <location>
        <begin position="25"/>
        <end position="36"/>
    </location>
</feature>
<feature type="disulfide bond" evidence="3">
    <location>
        <begin position="53"/>
        <end position="142"/>
    </location>
</feature>
<feature type="disulfide bond" description="Interchain" evidence="3">
    <location>
        <position position="98"/>
    </location>
</feature>
<feature type="disulfide bond" evidence="3">
    <location>
        <begin position="119"/>
        <end position="134"/>
    </location>
</feature>
<proteinExistence type="evidence at transcript level"/>
<dbReference type="EMBL" id="AY254339">
    <property type="protein sequence ID" value="AAQ01220.1"/>
    <property type="molecule type" value="mRNA"/>
</dbReference>
<dbReference type="SMR" id="Q6X5S1"/>
<dbReference type="GO" id="GO:0005576">
    <property type="term" value="C:extracellular region"/>
    <property type="evidence" value="ECO:0007669"/>
    <property type="project" value="UniProtKB-SubCell"/>
</dbReference>
<dbReference type="GO" id="GO:0090729">
    <property type="term" value="F:toxin activity"/>
    <property type="evidence" value="ECO:0007669"/>
    <property type="project" value="UniProtKB-KW"/>
</dbReference>
<dbReference type="FunFam" id="3.10.100.10:FF:000087">
    <property type="entry name" value="Snaclec rhodocetin subunit delta"/>
    <property type="match status" value="1"/>
</dbReference>
<dbReference type="Gene3D" id="3.10.100.10">
    <property type="entry name" value="Mannose-Binding Protein A, subunit A"/>
    <property type="match status" value="1"/>
</dbReference>
<dbReference type="InterPro" id="IPR001304">
    <property type="entry name" value="C-type_lectin-like"/>
</dbReference>
<dbReference type="InterPro" id="IPR016186">
    <property type="entry name" value="C-type_lectin-like/link_sf"/>
</dbReference>
<dbReference type="InterPro" id="IPR050111">
    <property type="entry name" value="C-type_lectin/snaclec_domain"/>
</dbReference>
<dbReference type="InterPro" id="IPR018378">
    <property type="entry name" value="C-type_lectin_CS"/>
</dbReference>
<dbReference type="InterPro" id="IPR016187">
    <property type="entry name" value="CTDL_fold"/>
</dbReference>
<dbReference type="PANTHER" id="PTHR22803">
    <property type="entry name" value="MANNOSE, PHOSPHOLIPASE, LECTIN RECEPTOR RELATED"/>
    <property type="match status" value="1"/>
</dbReference>
<dbReference type="Pfam" id="PF00059">
    <property type="entry name" value="Lectin_C"/>
    <property type="match status" value="1"/>
</dbReference>
<dbReference type="SMART" id="SM00034">
    <property type="entry name" value="CLECT"/>
    <property type="match status" value="1"/>
</dbReference>
<dbReference type="SUPFAM" id="SSF56436">
    <property type="entry name" value="C-type lectin-like"/>
    <property type="match status" value="1"/>
</dbReference>
<dbReference type="PROSITE" id="PS00615">
    <property type="entry name" value="C_TYPE_LECTIN_1"/>
    <property type="match status" value="1"/>
</dbReference>
<dbReference type="PROSITE" id="PS50041">
    <property type="entry name" value="C_TYPE_LECTIN_2"/>
    <property type="match status" value="1"/>
</dbReference>
<name>SL5_ECHPL</name>
<comment type="function">
    <text evidence="1">Interferes with one step of hemostasis (modulation of platelet aggregation, or coagulation cascade, for example).</text>
</comment>
<comment type="subunit">
    <text evidence="1">Heterodimer; disulfide-linked.</text>
</comment>
<comment type="subcellular location">
    <subcellularLocation>
        <location evidence="1">Secreted</location>
    </subcellularLocation>
</comment>
<comment type="tissue specificity">
    <text>Expressed by the venom gland.</text>
</comment>
<comment type="miscellaneous">
    <text>Shows greater sequence similarity to the beta than alpha subunits compared to other heterodimer snaclecs.</text>
</comment>
<comment type="similarity">
    <text evidence="4">Belongs to the snaclec family.</text>
</comment>
<reference key="1">
    <citation type="journal article" date="2003" name="Gene">
        <title>Novel sequences encoding venom C-type lectins are conserved in phylogenetically and geographically distinct Echis and Bitis viper species.</title>
        <authorList>
            <person name="Harrison R.A."/>
            <person name="Oliver J."/>
            <person name="Hasson S.S."/>
            <person name="Bharati K."/>
            <person name="Theakston R.D.G."/>
        </authorList>
    </citation>
    <scope>NUCLEOTIDE SEQUENCE [MRNA]</scope>
    <source>
        <tissue>Venom gland</tissue>
    </source>
</reference>